<organism>
    <name type="scientific">Vibrio cholerae serotype O1 (strain ATCC 39541 / Classical Ogawa 395 / O395)</name>
    <dbReference type="NCBI Taxonomy" id="345073"/>
    <lineage>
        <taxon>Bacteria</taxon>
        <taxon>Pseudomonadati</taxon>
        <taxon>Pseudomonadota</taxon>
        <taxon>Gammaproteobacteria</taxon>
        <taxon>Vibrionales</taxon>
        <taxon>Vibrionaceae</taxon>
        <taxon>Vibrio</taxon>
    </lineage>
</organism>
<feature type="chain" id="PRO_0000344728" description="Large ribosomal subunit protein bL36A">
    <location>
        <begin position="1"/>
        <end position="41"/>
    </location>
</feature>
<proteinExistence type="inferred from homology"/>
<keyword id="KW-0687">Ribonucleoprotein</keyword>
<keyword id="KW-0689">Ribosomal protein</keyword>
<reference key="1">
    <citation type="submission" date="2007-03" db="EMBL/GenBank/DDBJ databases">
        <authorList>
            <person name="Heidelberg J."/>
        </authorList>
    </citation>
    <scope>NUCLEOTIDE SEQUENCE [LARGE SCALE GENOMIC DNA]</scope>
    <source>
        <strain>ATCC 39541 / Classical Ogawa 395 / O395</strain>
    </source>
</reference>
<reference key="2">
    <citation type="journal article" date="2008" name="PLoS ONE">
        <title>A recalibrated molecular clock and independent origins for the cholera pandemic clones.</title>
        <authorList>
            <person name="Feng L."/>
            <person name="Reeves P.R."/>
            <person name="Lan R."/>
            <person name="Ren Y."/>
            <person name="Gao C."/>
            <person name="Zhou Z."/>
            <person name="Ren Y."/>
            <person name="Cheng J."/>
            <person name="Wang W."/>
            <person name="Wang J."/>
            <person name="Qian W."/>
            <person name="Li D."/>
            <person name="Wang L."/>
        </authorList>
    </citation>
    <scope>NUCLEOTIDE SEQUENCE [LARGE SCALE GENOMIC DNA]</scope>
    <source>
        <strain>ATCC 39541 / Classical Ogawa 395 / O395</strain>
    </source>
</reference>
<comment type="similarity">
    <text evidence="1">Belongs to the bacterial ribosomal protein bL36 family.</text>
</comment>
<name>RL361_VIBC3</name>
<sequence length="41" mass="4813">MKVLSSLKSAKNRHPDCQIVKRRGRLYVICKSNPRFKAVQR</sequence>
<protein>
    <recommendedName>
        <fullName evidence="1">Large ribosomal subunit protein bL36A</fullName>
    </recommendedName>
    <alternativeName>
        <fullName evidence="2">50S ribosomal protein L36 1</fullName>
    </alternativeName>
</protein>
<gene>
    <name evidence="1" type="primary">rpmJ1</name>
    <name type="ordered locus">VC0395_A0403</name>
    <name type="ordered locus">VC395_0895</name>
</gene>
<evidence type="ECO:0000255" key="1">
    <source>
        <dbReference type="HAMAP-Rule" id="MF_00251"/>
    </source>
</evidence>
<evidence type="ECO:0000305" key="2"/>
<accession>A5F343</accession>
<accession>C3LYP3</accession>
<dbReference type="EMBL" id="CP000627">
    <property type="protein sequence ID" value="ABQ21302.1"/>
    <property type="molecule type" value="Genomic_DNA"/>
</dbReference>
<dbReference type="EMBL" id="CP001235">
    <property type="protein sequence ID" value="ACP08909.1"/>
    <property type="molecule type" value="Genomic_DNA"/>
</dbReference>
<dbReference type="SMR" id="A5F343"/>
<dbReference type="KEGG" id="vco:VC0395_A0403"/>
<dbReference type="KEGG" id="vcr:VC395_0895"/>
<dbReference type="PATRIC" id="fig|345073.21.peg.866"/>
<dbReference type="eggNOG" id="COG0257">
    <property type="taxonomic scope" value="Bacteria"/>
</dbReference>
<dbReference type="HOGENOM" id="CLU_135723_3_2_6"/>
<dbReference type="OrthoDB" id="9801558at2"/>
<dbReference type="Proteomes" id="UP000000249">
    <property type="component" value="Chromosome 2"/>
</dbReference>
<dbReference type="GO" id="GO:1990904">
    <property type="term" value="C:ribonucleoprotein complex"/>
    <property type="evidence" value="ECO:0007669"/>
    <property type="project" value="UniProtKB-KW"/>
</dbReference>
<dbReference type="GO" id="GO:0005840">
    <property type="term" value="C:ribosome"/>
    <property type="evidence" value="ECO:0007669"/>
    <property type="project" value="UniProtKB-KW"/>
</dbReference>
<dbReference type="GO" id="GO:0003735">
    <property type="term" value="F:structural constituent of ribosome"/>
    <property type="evidence" value="ECO:0007669"/>
    <property type="project" value="InterPro"/>
</dbReference>
<dbReference type="GO" id="GO:0006412">
    <property type="term" value="P:translation"/>
    <property type="evidence" value="ECO:0007669"/>
    <property type="project" value="UniProtKB-UniRule"/>
</dbReference>
<dbReference type="HAMAP" id="MF_00251">
    <property type="entry name" value="Ribosomal_bL36"/>
    <property type="match status" value="1"/>
</dbReference>
<dbReference type="InterPro" id="IPR000473">
    <property type="entry name" value="Ribosomal_bL36"/>
</dbReference>
<dbReference type="InterPro" id="IPR035977">
    <property type="entry name" value="Ribosomal_bL36_sp"/>
</dbReference>
<dbReference type="InterPro" id="IPR047621">
    <property type="entry name" value="Ribosomal_L36_bact"/>
</dbReference>
<dbReference type="NCBIfam" id="NF002021">
    <property type="entry name" value="PRK00831.1"/>
    <property type="match status" value="1"/>
</dbReference>
<dbReference type="NCBIfam" id="TIGR01022">
    <property type="entry name" value="rpmJ_bact"/>
    <property type="match status" value="1"/>
</dbReference>
<dbReference type="PANTHER" id="PTHR47781">
    <property type="entry name" value="50S RIBOSOMAL PROTEIN L36 2"/>
    <property type="match status" value="1"/>
</dbReference>
<dbReference type="PANTHER" id="PTHR47781:SF1">
    <property type="entry name" value="LARGE RIBOSOMAL SUBUNIT PROTEIN BL36B"/>
    <property type="match status" value="1"/>
</dbReference>
<dbReference type="Pfam" id="PF00444">
    <property type="entry name" value="Ribosomal_L36"/>
    <property type="match status" value="1"/>
</dbReference>
<dbReference type="SUPFAM" id="SSF57840">
    <property type="entry name" value="Ribosomal protein L36"/>
    <property type="match status" value="1"/>
</dbReference>
<dbReference type="PROSITE" id="PS00828">
    <property type="entry name" value="RIBOSOMAL_L36"/>
    <property type="match status" value="1"/>
</dbReference>